<name>RVE3_ARATH</name>
<sequence length="287" mass="32795">MVTVNPSQAHCLPMKMSLPGFNTLPHTATTIPVSIRSNRTMSFFEDPTKKVRKPYTITKSRENWTEQEHDKFLEALHLFDRDWKKIKAFVGSKTVIQIRSHAQKYFLKVQKNGTKEHLPPPRPKRKANHPYPQKAPKFTLSSSNALFQHDYLYNTNSHPVISTTRKHGLVHCDVSIPSSVIKEEFGVSENCCSTSSSRDKQRTRIVTETNDQESCGKPHRVAPNFAEVYNFIGSVFDPKTTGHVKRLKEMDPINLETVLLLMKNLSVNLTSPEFDEQRKLISSYNAS</sequence>
<organism>
    <name type="scientific">Arabidopsis thaliana</name>
    <name type="common">Mouse-ear cress</name>
    <dbReference type="NCBI Taxonomy" id="3702"/>
    <lineage>
        <taxon>Eukaryota</taxon>
        <taxon>Viridiplantae</taxon>
        <taxon>Streptophyta</taxon>
        <taxon>Embryophyta</taxon>
        <taxon>Tracheophyta</taxon>
        <taxon>Spermatophyta</taxon>
        <taxon>Magnoliopsida</taxon>
        <taxon>eudicotyledons</taxon>
        <taxon>Gunneridae</taxon>
        <taxon>Pentapetalae</taxon>
        <taxon>rosids</taxon>
        <taxon>malvids</taxon>
        <taxon>Brassicales</taxon>
        <taxon>Brassicaceae</taxon>
        <taxon>Camelineae</taxon>
        <taxon>Arabidopsis</taxon>
    </lineage>
</organism>
<comment type="function">
    <text evidence="1">Probable transcription factor.</text>
</comment>
<comment type="subcellular location">
    <subcellularLocation>
        <location evidence="2">Nucleus</location>
    </subcellularLocation>
</comment>
<comment type="sequence caution" evidence="4">
    <conflict type="erroneous gene model prediction">
        <sequence resource="EMBL-CDS" id="AAF81310"/>
    </conflict>
    <text>The predicted gene At1g01510 has been split into 3 genes: At1g01500, At1g01510 and At1g01520.</text>
</comment>
<comment type="sequence caution" evidence="4">
    <conflict type="erroneous gene model prediction">
        <sequence resource="EMBL-CDS" id="CAA73305"/>
    </conflict>
</comment>
<gene>
    <name type="primary">RVE3</name>
    <name type="synonym">ASG4</name>
    <name type="synonym">LCL3</name>
    <name type="ordered locus">At1g01520</name>
    <name type="ORF">F22L4.18</name>
</gene>
<reference key="1">
    <citation type="journal article" date="2006" name="Plant Mol. Biol.">
        <title>The MYB transcription factor superfamily of Arabidopsis: expression analysis and phylogenetic comparison with the rice MYB family.</title>
        <authorList>
            <person name="Chen Y."/>
            <person name="Yang X."/>
            <person name="He K."/>
            <person name="Liu M."/>
            <person name="Li J."/>
            <person name="Gao Z."/>
            <person name="Lin Z."/>
            <person name="Zhang Y."/>
            <person name="Wang X."/>
            <person name="Qiu X."/>
            <person name="Shen Y."/>
            <person name="Zhang L."/>
            <person name="Deng X."/>
            <person name="Luo J."/>
            <person name="Deng X.-W."/>
            <person name="Chen Z."/>
            <person name="Gu H."/>
            <person name="Qu L.-J."/>
        </authorList>
    </citation>
    <scope>NUCLEOTIDE SEQUENCE [MRNA]</scope>
    <scope>GENE FAMILY</scope>
</reference>
<reference key="2">
    <citation type="submission" date="2005-04" db="EMBL/GenBank/DDBJ databases">
        <title>A small family of LHY-CCA1-like (LCL) MYB1R transcription factors: potential co-regulators of the circadian oscillator.</title>
        <authorList>
            <person name="Schmied K.C."/>
            <person name="Merkle T."/>
        </authorList>
    </citation>
    <scope>NUCLEOTIDE SEQUENCE [MRNA]</scope>
    <source>
        <strain>cv. Columbia</strain>
    </source>
</reference>
<reference key="3">
    <citation type="journal article" date="1998" name="Gene">
        <title>Sequence analysis of a 40-kb Arabidopsis thaliana genomic region located at the top of chromosome 1.</title>
        <authorList>
            <person name="Terryn N."/>
            <person name="Gielen J."/>
            <person name="De Keyser A."/>
            <person name="Van Den Daele H."/>
            <person name="Ardiles W."/>
            <person name="Neyt P."/>
            <person name="De Clercq R."/>
            <person name="Coppieters J."/>
            <person name="Dehais P."/>
            <person name="Villarroel R."/>
            <person name="Rouze P."/>
            <person name="van Montagu M."/>
        </authorList>
    </citation>
    <scope>NUCLEOTIDE SEQUENCE [GENOMIC DNA]</scope>
    <source>
        <strain>cv. Columbia</strain>
    </source>
</reference>
<reference key="4">
    <citation type="journal article" date="2000" name="Nature">
        <title>Sequence and analysis of chromosome 1 of the plant Arabidopsis thaliana.</title>
        <authorList>
            <person name="Theologis A."/>
            <person name="Ecker J.R."/>
            <person name="Palm C.J."/>
            <person name="Federspiel N.A."/>
            <person name="Kaul S."/>
            <person name="White O."/>
            <person name="Alonso J."/>
            <person name="Altafi H."/>
            <person name="Araujo R."/>
            <person name="Bowman C.L."/>
            <person name="Brooks S.Y."/>
            <person name="Buehler E."/>
            <person name="Chan A."/>
            <person name="Chao Q."/>
            <person name="Chen H."/>
            <person name="Cheuk R.F."/>
            <person name="Chin C.W."/>
            <person name="Chung M.K."/>
            <person name="Conn L."/>
            <person name="Conway A.B."/>
            <person name="Conway A.R."/>
            <person name="Creasy T.H."/>
            <person name="Dewar K."/>
            <person name="Dunn P."/>
            <person name="Etgu P."/>
            <person name="Feldblyum T.V."/>
            <person name="Feng J.-D."/>
            <person name="Fong B."/>
            <person name="Fujii C.Y."/>
            <person name="Gill J.E."/>
            <person name="Goldsmith A.D."/>
            <person name="Haas B."/>
            <person name="Hansen N.F."/>
            <person name="Hughes B."/>
            <person name="Huizar L."/>
            <person name="Hunter J.L."/>
            <person name="Jenkins J."/>
            <person name="Johnson-Hopson C."/>
            <person name="Khan S."/>
            <person name="Khaykin E."/>
            <person name="Kim C.J."/>
            <person name="Koo H.L."/>
            <person name="Kremenetskaia I."/>
            <person name="Kurtz D.B."/>
            <person name="Kwan A."/>
            <person name="Lam B."/>
            <person name="Langin-Hooper S."/>
            <person name="Lee A."/>
            <person name="Lee J.M."/>
            <person name="Lenz C.A."/>
            <person name="Li J.H."/>
            <person name="Li Y.-P."/>
            <person name="Lin X."/>
            <person name="Liu S.X."/>
            <person name="Liu Z.A."/>
            <person name="Luros J.S."/>
            <person name="Maiti R."/>
            <person name="Marziali A."/>
            <person name="Militscher J."/>
            <person name="Miranda M."/>
            <person name="Nguyen M."/>
            <person name="Nierman W.C."/>
            <person name="Osborne B.I."/>
            <person name="Pai G."/>
            <person name="Peterson J."/>
            <person name="Pham P.K."/>
            <person name="Rizzo M."/>
            <person name="Rooney T."/>
            <person name="Rowley D."/>
            <person name="Sakano H."/>
            <person name="Salzberg S.L."/>
            <person name="Schwartz J.R."/>
            <person name="Shinn P."/>
            <person name="Southwick A.M."/>
            <person name="Sun H."/>
            <person name="Tallon L.J."/>
            <person name="Tambunga G."/>
            <person name="Toriumi M.J."/>
            <person name="Town C.D."/>
            <person name="Utterback T."/>
            <person name="Van Aken S."/>
            <person name="Vaysberg M."/>
            <person name="Vysotskaia V.S."/>
            <person name="Walker M."/>
            <person name="Wu D."/>
            <person name="Yu G."/>
            <person name="Fraser C.M."/>
            <person name="Venter J.C."/>
            <person name="Davis R.W."/>
        </authorList>
    </citation>
    <scope>NUCLEOTIDE SEQUENCE [LARGE SCALE GENOMIC DNA]</scope>
    <source>
        <strain>cv. Columbia</strain>
    </source>
</reference>
<reference key="5">
    <citation type="journal article" date="2017" name="Plant J.">
        <title>Araport11: a complete reannotation of the Arabidopsis thaliana reference genome.</title>
        <authorList>
            <person name="Cheng C.Y."/>
            <person name="Krishnakumar V."/>
            <person name="Chan A.P."/>
            <person name="Thibaud-Nissen F."/>
            <person name="Schobel S."/>
            <person name="Town C.D."/>
        </authorList>
    </citation>
    <scope>GENOME REANNOTATION</scope>
    <source>
        <strain>cv. Columbia</strain>
    </source>
</reference>
<reference key="6">
    <citation type="submission" date="2006-11" db="EMBL/GenBank/DDBJ databases">
        <title>Arabidopsis ORF clones.</title>
        <authorList>
            <person name="Bautista V.R."/>
            <person name="Kim C.J."/>
            <person name="Chen H."/>
            <person name="Quinitio C."/>
            <person name="Ecker J.R."/>
        </authorList>
    </citation>
    <scope>NUCLEOTIDE SEQUENCE [LARGE SCALE MRNA]</scope>
    <source>
        <strain>cv. Columbia</strain>
    </source>
</reference>
<reference key="7">
    <citation type="journal article" date="2009" name="Proc. Natl. Acad. Sci. U.S.A.">
        <title>REVEILLE1, a Myb-like transcription factor, integrates the circadian clock and auxin pathways.</title>
        <authorList>
            <person name="Rawat R."/>
            <person name="Schwartz J."/>
            <person name="Jones M.A."/>
            <person name="Sairanen I."/>
            <person name="Cheng Y."/>
            <person name="Andersson C.R."/>
            <person name="Zhao Y."/>
            <person name="Ljung K."/>
            <person name="Harmer S.L."/>
        </authorList>
    </citation>
    <scope>GENE FAMILY</scope>
    <scope>NOMENCLATURE</scope>
</reference>
<protein>
    <recommendedName>
        <fullName>Protein REVEILLE 3</fullName>
    </recommendedName>
    <alternativeName>
        <fullName>Myb transcription factor LHY-CCA1-like3</fullName>
    </alternativeName>
    <alternativeName>
        <fullName>Myb-related protein ASG4</fullName>
    </alternativeName>
    <alternativeName>
        <fullName>Protein ALTERED SEED GERMINATION 4</fullName>
    </alternativeName>
    <alternativeName>
        <fullName>Transcription factor ASG4</fullName>
    </alternativeName>
</protein>
<keyword id="KW-0238">DNA-binding</keyword>
<keyword id="KW-0539">Nucleus</keyword>
<keyword id="KW-1185">Reference proteome</keyword>
<keyword id="KW-0804">Transcription</keyword>
<keyword id="KW-0805">Transcription regulation</keyword>
<accession>Q6R0H0</accession>
<accession>O23701</accession>
<accession>Q9LMM9</accession>
<feature type="chain" id="PRO_0000408479" description="Protein REVEILLE 3">
    <location>
        <begin position="1"/>
        <end position="287"/>
    </location>
</feature>
<feature type="domain" description="HTH myb-type" evidence="2">
    <location>
        <begin position="56"/>
        <end position="110"/>
    </location>
</feature>
<feature type="DNA-binding region" description="H-T-H motif" evidence="2">
    <location>
        <begin position="83"/>
        <end position="106"/>
    </location>
</feature>
<feature type="region of interest" description="Disordered" evidence="3">
    <location>
        <begin position="111"/>
        <end position="135"/>
    </location>
</feature>
<proteinExistence type="evidence at transcript level"/>
<dbReference type="EMBL" id="AY519508">
    <property type="protein sequence ID" value="AAS09978.1"/>
    <property type="molecule type" value="mRNA"/>
</dbReference>
<dbReference type="EMBL" id="AJ937211">
    <property type="protein sequence ID" value="CAI77452.1"/>
    <property type="molecule type" value="mRNA"/>
</dbReference>
<dbReference type="EMBL" id="Y12776">
    <property type="protein sequence ID" value="CAA73305.1"/>
    <property type="status" value="ALT_SEQ"/>
    <property type="molecule type" value="Genomic_DNA"/>
</dbReference>
<dbReference type="EMBL" id="AC061957">
    <property type="protein sequence ID" value="AAF81310.1"/>
    <property type="status" value="ALT_SEQ"/>
    <property type="molecule type" value="Genomic_DNA"/>
</dbReference>
<dbReference type="EMBL" id="CP002684">
    <property type="protein sequence ID" value="AEE27299.1"/>
    <property type="molecule type" value="Genomic_DNA"/>
</dbReference>
<dbReference type="EMBL" id="BT029347">
    <property type="protein sequence ID" value="ABK32161.1"/>
    <property type="molecule type" value="mRNA"/>
</dbReference>
<dbReference type="RefSeq" id="NP_171659.1">
    <property type="nucleotide sequence ID" value="NM_100034.2"/>
</dbReference>
<dbReference type="SMR" id="Q6R0H0"/>
<dbReference type="BioGRID" id="24572">
    <property type="interactions" value="2"/>
</dbReference>
<dbReference type="FunCoup" id="Q6R0H0">
    <property type="interactions" value="4"/>
</dbReference>
<dbReference type="IntAct" id="Q6R0H0">
    <property type="interactions" value="2"/>
</dbReference>
<dbReference type="STRING" id="3702.Q6R0H0"/>
<dbReference type="PaxDb" id="3702-AT1G01520.1"/>
<dbReference type="EnsemblPlants" id="AT1G01520.1">
    <property type="protein sequence ID" value="AT1G01520.1"/>
    <property type="gene ID" value="AT1G01520"/>
</dbReference>
<dbReference type="GeneID" id="839337"/>
<dbReference type="Gramene" id="AT1G01520.1">
    <property type="protein sequence ID" value="AT1G01520.1"/>
    <property type="gene ID" value="AT1G01520"/>
</dbReference>
<dbReference type="KEGG" id="ath:AT1G01520"/>
<dbReference type="Araport" id="AT1G01520"/>
<dbReference type="TAIR" id="AT1G01520">
    <property type="gene designation" value="ASG4"/>
</dbReference>
<dbReference type="eggNOG" id="KOG0724">
    <property type="taxonomic scope" value="Eukaryota"/>
</dbReference>
<dbReference type="HOGENOM" id="CLU_052430_0_1_1"/>
<dbReference type="InParanoid" id="Q6R0H0"/>
<dbReference type="OrthoDB" id="118550at2759"/>
<dbReference type="PhylomeDB" id="Q6R0H0"/>
<dbReference type="PRO" id="PR:Q6R0H0"/>
<dbReference type="Proteomes" id="UP000006548">
    <property type="component" value="Chromosome 1"/>
</dbReference>
<dbReference type="ExpressionAtlas" id="Q6R0H0">
    <property type="expression patterns" value="baseline and differential"/>
</dbReference>
<dbReference type="GO" id="GO:0005634">
    <property type="term" value="C:nucleus"/>
    <property type="evidence" value="ECO:0007669"/>
    <property type="project" value="UniProtKB-SubCell"/>
</dbReference>
<dbReference type="GO" id="GO:0003677">
    <property type="term" value="F:DNA binding"/>
    <property type="evidence" value="ECO:0007669"/>
    <property type="project" value="UniProtKB-KW"/>
</dbReference>
<dbReference type="GO" id="GO:0003700">
    <property type="term" value="F:DNA-binding transcription factor activity"/>
    <property type="evidence" value="ECO:0000250"/>
    <property type="project" value="TAIR"/>
</dbReference>
<dbReference type="CDD" id="cd00167">
    <property type="entry name" value="SANT"/>
    <property type="match status" value="1"/>
</dbReference>
<dbReference type="FunFam" id="1.10.10.60:FF:000023">
    <property type="entry name" value="protein REVEILLE 6 isoform X1"/>
    <property type="match status" value="1"/>
</dbReference>
<dbReference type="Gene3D" id="1.10.10.60">
    <property type="entry name" value="Homeodomain-like"/>
    <property type="match status" value="1"/>
</dbReference>
<dbReference type="InterPro" id="IPR009057">
    <property type="entry name" value="Homeodomain-like_sf"/>
</dbReference>
<dbReference type="InterPro" id="IPR017930">
    <property type="entry name" value="Myb_dom"/>
</dbReference>
<dbReference type="InterPro" id="IPR006447">
    <property type="entry name" value="Myb_dom_plants"/>
</dbReference>
<dbReference type="InterPro" id="IPR001005">
    <property type="entry name" value="SANT/Myb"/>
</dbReference>
<dbReference type="InterPro" id="IPR017884">
    <property type="entry name" value="SANT_dom"/>
</dbReference>
<dbReference type="NCBIfam" id="TIGR01557">
    <property type="entry name" value="myb_SHAQKYF"/>
    <property type="match status" value="1"/>
</dbReference>
<dbReference type="PANTHER" id="PTHR12802:SF146">
    <property type="entry name" value="PROTEIN REVEILLE 3"/>
    <property type="match status" value="1"/>
</dbReference>
<dbReference type="PANTHER" id="PTHR12802">
    <property type="entry name" value="SWI/SNF COMPLEX-RELATED"/>
    <property type="match status" value="1"/>
</dbReference>
<dbReference type="Pfam" id="PF00249">
    <property type="entry name" value="Myb_DNA-binding"/>
    <property type="match status" value="1"/>
</dbReference>
<dbReference type="Pfam" id="PF24904">
    <property type="entry name" value="RVE6"/>
    <property type="match status" value="1"/>
</dbReference>
<dbReference type="SMART" id="SM00717">
    <property type="entry name" value="SANT"/>
    <property type="match status" value="1"/>
</dbReference>
<dbReference type="SUPFAM" id="SSF46689">
    <property type="entry name" value="Homeodomain-like"/>
    <property type="match status" value="1"/>
</dbReference>
<dbReference type="PROSITE" id="PS51294">
    <property type="entry name" value="HTH_MYB"/>
    <property type="match status" value="1"/>
</dbReference>
<evidence type="ECO:0000250" key="1"/>
<evidence type="ECO:0000255" key="2">
    <source>
        <dbReference type="PROSITE-ProRule" id="PRU00625"/>
    </source>
</evidence>
<evidence type="ECO:0000256" key="3">
    <source>
        <dbReference type="SAM" id="MobiDB-lite"/>
    </source>
</evidence>
<evidence type="ECO:0000305" key="4"/>